<evidence type="ECO:0000255" key="1">
    <source>
        <dbReference type="HAMAP-Rule" id="MF_01161"/>
    </source>
</evidence>
<sequence length="430" mass="50326">MLYEKFEYNINNLIGNFGLSKIAAAVSGGSDSVALLYLANIWAEKNNIELSVISVDHNLREQSKQETHYIQNISNSLNRKHYSLSFDHQNNFSNLQERAREGRYDLMTNLCLELDILVLLTAHHEDDYVENFCLRLERNSGIFGLSSSNINWYNNIQIIRPLYNIPKSELVEYLVSHNIKWFEDESNSSDKYRRNIIRQKLAKGEDYIKADIILQQLKINDLLDNKFKPELISAIAEAVKIFEYGFAFLDLVKFDKFSNEVKVQIINFLLIIISGQFRAARFYSVEPILKLITQDVNFKNTLHGCVINRIQNELLIYREFGKKLPESKILLDKSVIWDNRFRITRNQETPNCFVTHLSLEDYKMIKKQLDLEPLKNLSCKNHNAIIFTLPIIKILEKVIAIPHISYYDNDMWNFEVSFAPNFVSRFTHFC</sequence>
<proteinExistence type="inferred from homology"/>
<keyword id="KW-0067">ATP-binding</keyword>
<keyword id="KW-0963">Cytoplasm</keyword>
<keyword id="KW-0436">Ligase</keyword>
<keyword id="KW-0547">Nucleotide-binding</keyword>
<keyword id="KW-0819">tRNA processing</keyword>
<dbReference type="EC" id="6.3.4.19" evidence="1"/>
<dbReference type="EMBL" id="CP000053">
    <property type="protein sequence ID" value="AAY60991.1"/>
    <property type="molecule type" value="Genomic_DNA"/>
</dbReference>
<dbReference type="SMR" id="Q4UN67"/>
<dbReference type="STRING" id="315456.RF_0140"/>
<dbReference type="KEGG" id="rfe:RF_0140"/>
<dbReference type="eggNOG" id="COG0037">
    <property type="taxonomic scope" value="Bacteria"/>
</dbReference>
<dbReference type="HOGENOM" id="CLU_018869_3_2_5"/>
<dbReference type="OrthoDB" id="9807403at2"/>
<dbReference type="Proteomes" id="UP000008548">
    <property type="component" value="Chromosome"/>
</dbReference>
<dbReference type="GO" id="GO:0005737">
    <property type="term" value="C:cytoplasm"/>
    <property type="evidence" value="ECO:0007669"/>
    <property type="project" value="UniProtKB-SubCell"/>
</dbReference>
<dbReference type="GO" id="GO:0005524">
    <property type="term" value="F:ATP binding"/>
    <property type="evidence" value="ECO:0007669"/>
    <property type="project" value="UniProtKB-UniRule"/>
</dbReference>
<dbReference type="GO" id="GO:0032267">
    <property type="term" value="F:tRNA(Ile)-lysidine synthase activity"/>
    <property type="evidence" value="ECO:0007669"/>
    <property type="project" value="UniProtKB-EC"/>
</dbReference>
<dbReference type="GO" id="GO:0006400">
    <property type="term" value="P:tRNA modification"/>
    <property type="evidence" value="ECO:0007669"/>
    <property type="project" value="UniProtKB-UniRule"/>
</dbReference>
<dbReference type="CDD" id="cd01992">
    <property type="entry name" value="TilS_N"/>
    <property type="match status" value="1"/>
</dbReference>
<dbReference type="Gene3D" id="3.40.50.620">
    <property type="entry name" value="HUPs"/>
    <property type="match status" value="1"/>
</dbReference>
<dbReference type="HAMAP" id="MF_01161">
    <property type="entry name" value="tRNA_Ile_lys_synt"/>
    <property type="match status" value="1"/>
</dbReference>
<dbReference type="InterPro" id="IPR014729">
    <property type="entry name" value="Rossmann-like_a/b/a_fold"/>
</dbReference>
<dbReference type="InterPro" id="IPR011063">
    <property type="entry name" value="TilS/TtcA_N"/>
</dbReference>
<dbReference type="InterPro" id="IPR012094">
    <property type="entry name" value="tRNA_Ile_lys_synt"/>
</dbReference>
<dbReference type="InterPro" id="IPR012795">
    <property type="entry name" value="tRNA_Ile_lys_synt_N"/>
</dbReference>
<dbReference type="NCBIfam" id="TIGR02432">
    <property type="entry name" value="lysidine_TilS_N"/>
    <property type="match status" value="1"/>
</dbReference>
<dbReference type="PANTHER" id="PTHR43033">
    <property type="entry name" value="TRNA(ILE)-LYSIDINE SYNTHASE-RELATED"/>
    <property type="match status" value="1"/>
</dbReference>
<dbReference type="PANTHER" id="PTHR43033:SF1">
    <property type="entry name" value="TRNA(ILE)-LYSIDINE SYNTHASE-RELATED"/>
    <property type="match status" value="1"/>
</dbReference>
<dbReference type="Pfam" id="PF01171">
    <property type="entry name" value="ATP_bind_3"/>
    <property type="match status" value="1"/>
</dbReference>
<dbReference type="SUPFAM" id="SSF52402">
    <property type="entry name" value="Adenine nucleotide alpha hydrolases-like"/>
    <property type="match status" value="1"/>
</dbReference>
<protein>
    <recommendedName>
        <fullName evidence="1">tRNA(Ile)-lysidine synthase</fullName>
        <ecNumber evidence="1">6.3.4.19</ecNumber>
    </recommendedName>
    <alternativeName>
        <fullName evidence="1">tRNA(Ile)-2-lysyl-cytidine synthase</fullName>
    </alternativeName>
    <alternativeName>
        <fullName evidence="1">tRNA(Ile)-lysidine synthetase</fullName>
    </alternativeName>
</protein>
<name>TILS_RICFE</name>
<organism>
    <name type="scientific">Rickettsia felis (strain ATCC VR-1525 / URRWXCal2)</name>
    <name type="common">Rickettsia azadi</name>
    <dbReference type="NCBI Taxonomy" id="315456"/>
    <lineage>
        <taxon>Bacteria</taxon>
        <taxon>Pseudomonadati</taxon>
        <taxon>Pseudomonadota</taxon>
        <taxon>Alphaproteobacteria</taxon>
        <taxon>Rickettsiales</taxon>
        <taxon>Rickettsiaceae</taxon>
        <taxon>Rickettsieae</taxon>
        <taxon>Rickettsia</taxon>
        <taxon>spotted fever group</taxon>
    </lineage>
</organism>
<gene>
    <name evidence="1" type="primary">tilS</name>
    <name type="ordered locus">RF_0140</name>
</gene>
<reference key="1">
    <citation type="journal article" date="2005" name="PLoS Biol.">
        <title>The genome sequence of Rickettsia felis identifies the first putative conjugative plasmid in an obligate intracellular parasite.</title>
        <authorList>
            <person name="Ogata H."/>
            <person name="Renesto P."/>
            <person name="Audic S."/>
            <person name="Robert C."/>
            <person name="Blanc G."/>
            <person name="Fournier P.-E."/>
            <person name="Parinello H."/>
            <person name="Claverie J.-M."/>
            <person name="Raoult D."/>
        </authorList>
    </citation>
    <scope>NUCLEOTIDE SEQUENCE [LARGE SCALE GENOMIC DNA]</scope>
    <source>
        <strain>ATCC VR-1525 / URRWXCal2</strain>
    </source>
</reference>
<feature type="chain" id="PRO_0000273103" description="tRNA(Ile)-lysidine synthase">
    <location>
        <begin position="1"/>
        <end position="430"/>
    </location>
</feature>
<feature type="binding site" evidence="1">
    <location>
        <begin position="27"/>
        <end position="32"/>
    </location>
    <ligand>
        <name>ATP</name>
        <dbReference type="ChEBI" id="CHEBI:30616"/>
    </ligand>
</feature>
<comment type="function">
    <text evidence="1">Ligates lysine onto the cytidine present at position 34 of the AUA codon-specific tRNA(Ile) that contains the anticodon CAU, in an ATP-dependent manner. Cytidine is converted to lysidine, thus changing the amino acid specificity of the tRNA from methionine to isoleucine.</text>
</comment>
<comment type="catalytic activity">
    <reaction evidence="1">
        <text>cytidine(34) in tRNA(Ile2) + L-lysine + ATP = lysidine(34) in tRNA(Ile2) + AMP + diphosphate + H(+)</text>
        <dbReference type="Rhea" id="RHEA:43744"/>
        <dbReference type="Rhea" id="RHEA-COMP:10625"/>
        <dbReference type="Rhea" id="RHEA-COMP:10670"/>
        <dbReference type="ChEBI" id="CHEBI:15378"/>
        <dbReference type="ChEBI" id="CHEBI:30616"/>
        <dbReference type="ChEBI" id="CHEBI:32551"/>
        <dbReference type="ChEBI" id="CHEBI:33019"/>
        <dbReference type="ChEBI" id="CHEBI:82748"/>
        <dbReference type="ChEBI" id="CHEBI:83665"/>
        <dbReference type="ChEBI" id="CHEBI:456215"/>
        <dbReference type="EC" id="6.3.4.19"/>
    </reaction>
</comment>
<comment type="subcellular location">
    <subcellularLocation>
        <location evidence="1">Cytoplasm</location>
    </subcellularLocation>
</comment>
<comment type="domain">
    <text>The N-terminal region contains the highly conserved SGGXDS motif, predicted to be a P-loop motif involved in ATP binding.</text>
</comment>
<comment type="similarity">
    <text evidence="1">Belongs to the tRNA(Ile)-lysidine synthase family.</text>
</comment>
<accession>Q4UN67</accession>